<sequence length="11103" mass="1211797">MGTIKTKFKNNYLKNSYLFIIYIILFNLVIGIANSEALGVPSKIRPGRYGEICSNCTPKKSYLDFSLISPTGFELVDNAELEWTKDFPSVKVSVNGSQNPVIMGQTHHYSELLENVNFFNITGRTDIKSLMHYSCGNATSSVVFEFTKPVERFLLLIFGVNSEVSLVVDSYDAYGYPVNMLNWDTLDHGLLSTHYPSNTSIHHPPAVKQSHNSATLDLTWSNKGFNTYIILEPNQMISKIILSVKGVHCNEEICKGQALYYSLVALGDCQDSNLFAVGNYVFFDVNRDGVHETTELFAPNVKVELYDAISSTRLIASTFTDLNGKYFFDNLPEGAYVVKIYPPSDYMISSNGPDNVINAITSFSNSFVLTINGTNVVPVPPNSGINATYWNPKINGGITLIRYAISGNVCNDHDDNGVSDGNLSGITVQLTTPSHVVLKTAQTDYAGNYVFDDLSEGVYSVHFILPENYYFSTASLSRLSPGGYLDGLQLSQNTTTLTQSSPNVLILPTTNHLLSNVNICMKTKTFALSGFTFKDANSDGLYLLANQDLPLPGVVVQLFKSGQSAIPLATTTTDSLGKYFFDLIVSGDYDIHFNAPDGYHDTKTSSQSLADSNGWIRSAKVNDNTVVPNTNPSIKATDVLQNQNAGFTLNQYGIGSHVWLDSNRDSERGPTETTGVANVTVNLLLNGVVVATTKTSADGSYSFDGLAAGVYNAQFILPSNLYKFSPQFDESRPDTTGLVQQINLTPQNPQLVAGTGLPPYPLANKIDPTVNAGVYKVDFAIGDLVWIDKDSNGVFNPATDQGAPFVTINLVNEKTSELLTTQSAQDGSYSFNHLAAGNYCIHFVIPQGYKAVTTSYYSVGDENGEVCFTLNVENSDSASSYTKHYLTPLLGDYIDDTLDQGIVMSTFAIGDFVFIDSNRDGLYQSSTETPAEGVKVVLSQSGHLVADTLTDSKGHYVFDNIQTGVYDIAFIIPSGYQVTSPSSDNKANSLGLVSTIDLSFNDDQVTPVNPSIDGPLKASFIDRTIDAGLVRPLFTIGTHAWIDENNNLIDDDISNGLPNITMTLINNAEGGKVVQSVSTDSKGQYSFTNVPEGDYCVVATNSNPSLSLLPKSADSPFDAAGKYCFVLVAGDNPSKTDANIGYTTKLSVGQFIWVDSNNDGSFDKSKENLLSNTLVTVTITNQKTGQIQSVETSKGDYQFIGLLPGDYCVQMTIPDNFKQVVMGVDSPFNSSAISCFNLNSTSRNDINFGLVPLYPVGDKIWIDPFNTGKQLPDSPGISNIPLSLISQKTNQIISSVVTDSNGKYQFEDVPPGDYCIKATINRDQYSLVNKSLDSPFQVSNTNNVESCFTVSGPLDNQDLGLTPFLEIGTFVWVDGKGNNLYEKSKNDILKSDVSITLTNIGSGDSVSTITDSEGKYNFNHLLAGDYCIKATQPVPYQFVVTSDDSVVDSKGEYCFKLTESNPNINIGLVPLNSIGSVSWLDKNNNGNREDNEFLPGVELSLQDSNGKVLDTTTTDESGNYKFDNLLPGDYCIIATTPIGSIPVTGSSDNLFVDDKYCLTFTGPQPIDRTDVNPGFVSTLDIGQYVWIDKNNNGKEESDEPLLPGVQVIITSPNGTKIADLVTDENGKYALKDQVPGSYCVQMVIPPHYKQVSQSEDSPFDSDVKYCFDLIDESITNANLGLIPLFNVGDKVWLDPFNTGKQTDDSPPLSDITIRLTDKDGNEISNTKSGPDGKYQFEDVPPGDYCVEADIPKDQYKPVNTSSDSPFSADSTNDSFVTVKYCFTITDHDVKPPIGVTPFYEIGTFVWIDSNNNDKFEQPSDIKKSDVSITLTNSGNGETSTIQTDANGEYNFNHLLASDYCIKATEPNKYQFVVTSDDSVVDSTGEYCFKLTQSNPNINIGLVPLNSIGSVSWLDKNNNGNKEDNEFLPGVELSLQDSNGKVLETTTTDESGNYKFDNLLPGDYCIVTTTPIGSIPVTSSPDNLFVDDKYCLTFTGPQPIDRTDVNPGFVSTLDIGQYVWIDKNNNGKEEPDEPLLPGVQVIITSPNGTSIANLVTDENGKYALKDQVPGSYCVQMIIPDHYKQVAQSEDSPFDLDVKYCFDLDDKSITNANLGLIPLYPIGDTVWLDPFNTGKRTDDSPGVEGIELNLVDKDGKVIQSTTSGPNGKYQFEDVPPGDYCIEAKIPNDQYKPVNTSSDSPFSPTSDNSIVKSCLTVSGPLDNQNLGLSPFYEIGTIVWIDSNNNDKFEQPSDIGKSDVSITLTNSGNGETSTIQTDVDGNYNFNHLLAGDYCIKATEPNKYQFVVTSDDSVVNSTGEYCFKLTQSNPNINIGLVPLNSIGSVSWLDKNNNGNKEDNEFLPGVELSLQDSNGKVLDTTTTDESGNYKFDNLLPGDYCIVATTPIGSIPVTSSPDNLFVNNKYCLTFTGPQPIDRTDVNPGFVSTLDIGQYVWIDKNNNGKEESDEPLLPGVQVIITSPNGTKIADLVTDENGNYALKDQVPGSYCVQMVIPPHYKQVSQSEDSPFDLDVKYCFDLDDKSITNANLGLIPLFNVGDKVWLDPFNTGKQTDDSPPLSDITIRLTDKDGNEITNTKSGPDGKYQFEDVPPGDYCVEADIPKDQYKPVNTSSDSPFSVDSTNDNFVTVKYCFTITDHDVKPPIGVTPFYEIGTFVWIDSNNNDKFEQPSDIKKSDVSITLTNSGNGETSTIQTDADGEYNFNHLLAGDYCIKATEPNKYQFVVTSDDSVVDSTGEYCFKLTQSNPNINIGLVPLNSIGSVSWLDKNNNGNKEDNEFLPGVELSLQDPNGTVFETTTTDESGSYKFGNLLPGDYCIVATTPIGSIPVTSSPDNLFVNNKYCLTFTGPQPIDRIDVNPGFVSTLDIGQYVWIDKNNNGKEESDEPLLPGVQVIITSSNGTKIADLVTDENGKYALKDQVPGSYCVQMIIPDHYKQVSQSEDSPFDSDVKYCFDLIDESITNANLGLIPLYPIGDTVWLDPFNTGKRTDDSPGLEGIELQLVDKDGKVIQSTTSGPDGKYQFEDVPPGDYCIEATIPNDTYQSVNTSSDSPFSPTSDNSIVKSCFAVSGPLDNQNLGLSPFYEIGTIVWIDSNNNDKFEQPNDIGKSNVSITLTNSGNGEMYSTISNTDGEYNFNHLLAGDYCIKVTEPDQYKFVVTSDDSVVDSTGEYCFKLTESNPNINIGLVPLNSIGSVSWLDKNNDGKRQDNEFLPGVELSLQDPNGIVIQTITTDSDGNYYFDNLLPGDYCISATTPIGSIPVTSSPDNLFVDGKYCLTFTGPLPTDRTDVNPGFVSTLDIGQYVWIDKNNNGKEEPDEPLLPGVQVIITSSNGTKIADLVTDENGKYALKDQVPGSYCVQMIISDHYKQVAQSEESPFDSDVKYCFDLIDESITNANLGLIPLYPIGDTVWLDQFNTGKRTDDSPGVEGIELQLVDKDGKVIQSTTSGPDGKYQFEDVPPGDYCIEATIPNDQYKPVNTSSDSPFSPTSDESIVKSCFAVSGPLDNQNLGLSLFYEIGTMVWIDSNNNGKFEQPSDVLKSDVSITLTNSGNGETSTIQTDVDGNYNFNHLLAGDYCIKATQPDQYQFVVTSDDSVVDSTGEYCFKLTQSNPNINIGLVPLNSIGSVSWLDKNNNGKKEDNEFLPGVELSLQDSNGKVLDTTTTDESGSYKFDNLLPGDYCIVTTTPIGSIPVTSSPDNLFVNNKYCLTFTGPQPIDRTDVNPGFVSTLDIGQYVWIDKNNNGKEEPDEPLLPGVQVIITSPNGTSIANLVTDENGKYTLKDQVPGSYCVQMIIPPHYKQVAQSEDSPFDLDVKYCFDLVNESISNANLGLVPLFKVGDKVWLDPFNTGKQTDDSPPLSDITIRLTDKDGKVIQSTTSGPDGKYQFEDVPPGDYCVEAYIPKDQYKPVNTSSDSPFSVDSTNDNFVTVRYCFTITDHDVKPPIGVTPFYEIGTIVWIDSNNNDRFEQPSDIGKSDVSITLTNSGNGETSTIQTDVDGEYNFNHLLAGDYCIKATEPNKYQFVVTSDDSVVDSTGEYCFKLTQSNPNINIGLVPLNSIGSVSWLDKNNNGNKEDNEFLPGVELSLQDSNGKVLDTTTTDESGNYKFDNLLPGDYCIVVTTPIGSIPVTSSPDNLFVDDKYCLTFTGPQPIDRTDVNPGFVSTLDIGQYVWIDKNNNGKEESDEPLLPGVQVIITSPNGTSIANLVTDENGKYTLKDQVPGSYCVQMVSPPHYKQVSQSEDSPFDSDIKYCFDLDDKSITNANLGLVPLFNVGDKVWLDPFNTGKQTDDSPPLSDITIRLTDKDGNEITKTKSRPDGNENSNTKSGPDGKYQFEDVPPGDYCVEADIPKDQYKPVNTSSDSPFSVDSTNDNFVTVKYCFTITDHDVKPPIGVTPFYEIGTFVWIDSNNNDKFEQPSDIKKSDVSITLTNSGNGETSTIQTDVDGNYNFNHLLAGDYCIKATEPNKYQFVVTSDDSVVDSTGEYCFKLTESNPNINIGLVPLNSIGSVSWLDKNNNGKKEDNEFLPGVELSLQDSNGKVLDTTTTDESGNYKFDNLLPGDYCIVATTPIGSIPVTSSPDNLFVNNKYCLTFTGPQPIDRTDVNPGFVSTLDIGQYVWIDKNNNGKEESDEPLLPGVQVIITSSNGTKIADLVTDENGKYALKDQVPGSYCVQMIIPDHYKQVSQSEDSPFDSDVKYCFDLEDKSITNANLGLVPLYNLGDTVWLDPFNTGKRTDDSPGVEGIPLTLIDKYGNSIQSTASGPNGKYQFEDVPPGDYCIEASVPRKYQVENTSSDSPFSVVLPLPTSSIEPIKSRYCFTVTEPVNNANLGLIPFLEIGTFVWIDSNNNDKFEQPSDIKQSDVPITLTNSGNGETSTIQTDVDGNYNFNHLLAGDYCIKATEPNKYQFVVTSDDSVVNSTGEYCFKLTESNPNINIGLVPLNSIGSFAWLDKDNDGLASEGESLPGVELSLQDSNGKVLETTTTDESGNYKFDNLLPGDYCIVATTPIGSIPVTSSPDNLFVDDKYCLTFTGPQPIDRYDVNPGFVSTLDIGQYVWIDKNNNGKEESDEPLLPGVQVIITSPNGTKIADLVTDENGNYALKDQVPGSYCIQMIIPPHYKQVAQSEDSPFDSDVKYCFDLIDESITNANLGLVPLYPIGDTVWLDPFNTGKRTDDSPGLEGIELQLVDKDGKVIQSTTSGPNGKYQFEDVPPGDYCIEATISNDILRAVNTSSDSPFSPTSDESIVKSCFAVSGPLDNQNLGLSPFYEIGTIVWIDSNNNDKFEQPSDIGKSNVSITLTNSGNGETSTIQTDVDGNYNFNHLLAGDYCIKVTQPDQYQFVVTSDDSVVNSTGEYCFKLTQSNPNINIGLVPLNSIGSVSWLDKNNNGNKEDNEFLPGVELSLQDSNGKVLDTTTTDESGNYKFDNLLPGDYCIVSTTPIGSIPVTSSPDNLFVDDKYCLTFTGPQPIDRYDVNPGFVSTLDIGQYVWIDKNNNGKEESDEPLLPGVQVIITSPNGTKIADLVTDENGNYALKDQVPGSYCVQMVIPPHYKQVAQSEDSPFDSDVKYCFDLIDESITNANLGLIPLFKVGDKVWLDPFNTGKQTDDSPPLSDITIRLTDKDGNEITNTKSGPDGKYQFEDVPPGDYCVEADILKDQYKPVNTSSDSPFSVDSTNDNFVTVKYCFTITDHDVKPPIGVTPFYEIGTFVWIDSNNNDNFEQPSDIKKSDVSITLTNSGNGETSTIQTDVDGNYNFNHLLAGDYCIKVTEPNKYQFVVTSDDSVVDSTGEYCFKLTQSNPNINIGLVPLNSIGSVSWLDKNNNGNKEDNEFLPGVELSLQDSNGKVLDTTTTDESGNYKFDNLLPGDYCIVATTPIGSIPVTSSPDNLFVDDKYCLTFTGPQPIDRTDVNPGFVSTLDIGQYVWIDKNNNGKEESDEPLLPGVQVIITSPNGTKIADLVTDENGNYALKDQVPGPYCVQMVIPPHYKQVVQSEDSPFDSDVKYCFDLVDKSITNANLGLIPLYPIGDTVWLDPFNTGKRTDDSPGVEGIELNLVDKDGKVIQSTTSGPDGKYQFEDVPPGDYCIEATIPNDQYKPVNTSSDSPFSPTSDESIVKSCFKVSGPLDNQNLGLSPFYEIGTIVWIDSNNNDKFEQPSDIGKSNVSITLTNSGNGETSTIQTDVDGNYNFNHLLAGDYCIKATQPDQYQFVVTSDDSVIDSTGEYCFKLTQSNPNINIGLVPLNSIGSVSWLDKNNNGNKEDNEFLPGVELSLQDSNGKVLETTTTDESGNYKFDNLLPGDYCIVATTPIGSIPVTSSPDNLFVNNKYCLTFTGPQPIDRYDVNPGFVSTLDIGQYVWIDKNNNGKEESDEPLLPGVQVIITSPNGTKIADLVTDENGNYALKDQVPGSYCVQMVIPPHYKQDAQSEDSPFDSDVKYCFDLVDKSITNANLGLIPLFNVGDKVWLDPFNTGKQTDDSPPLSDITIRLTDKDGNEITNTKSGPDGKYQFEDVPPGDYCVEADILKDQYKPVNTSSDSPFSADSTNDSFVTVKYCFTITDHDVKPPIGVTPFYEIGTFVWIDSNNNDKFEQPSDIKKSDVSITLTNSGNGETSTIQTDADGEYNFNHLLAGDYCIKATEPNKYQFVVTSDDSVVDSTGEYCFKLTQSNPNINIGLVPLNSIGTFAWLDKDNDGLATAEESLEGVELSLQDPNGTVLQTITTDESGNYKFDNLLPGDYCIVGTTPIGSIPVTGSPDNLFVNNKYCLTFTGPQPIDRTDVNPGFVPTLDIGQYVWIDKNNNGKEEPDEPLLPGVQVIITSPNGTSIANLFTDENGKYALKDQVPGSYCVQMIIPDHYKQVNQSEDSPFDSDVKYCFDLEDKSITNANLGLVPLYNLGDSVWLDPFNTGKRTDDSPGVEGIPLTLIDKYGNSIQSTASGPNGKYQFEDVPPGDYCIEASVPRKYQVENTSSDSPFSVVLPLPTSSIEPIKSRYCFTVTEPVNNANLGLIPFLEIGTFVWIDSNNNDKFEQPSDIKQSDVSITLTNSGNGETSTIQTDSNGNYKFNNLLAGDYCIKVTEPNKYQFVVTSDDSVVNSTGEYCFKLTQSNPNINIGLVPLNSIGTFAWLDKDNDGLATAGESLAGVELSLQDPNGTLFETTTTDESGYYLFYELLPGDYCIVATTPIGSIPVTGSPDNLFVNNKYCLTFTGPQPIDRYDVNPGFVSTLDIGQYVWIDKNNNGKEEPDEPLLPGVQVIITSPNGTKIADLVTDENGNYALKDQVPGSYCVQMVIPPHYKQDAQSEDSPFDSDVKYCFDLVDKSITNANLGLIPLFNVGDKVWLDPFNTGKQTDDSPPLSDITIRLTDKDGNEITNTKSGPDGKYQFEDVPPGDYCVEADIPKDQYKPVNTSSDSPFSADSTNDSFVTVKYCFTITDHDVKPPIGVTPFYEIGTFVWIDSNNNDKFEQPSDIKKSDVSITLTNSGNGETSTIQTDADGEYNFNHLLAGDYCIKATEPNKYQFVVTSDDSVVDSTGEYCFKLTQSNPNINIGLVPLNSIGSVSWLDKNNNGKRENNEFLPGVELSLQDSNGKVLDTTTTTDESGNYKFDNLLPGDYCIVGTTPIGSIPVTGSPDNLFVDNKYCLTFTGPQPIDRTDVNPGFVSTLDIGQYVWIDKNNNGKEESDEPLLTGVQVIITSPNGTSIANLVTDENGKYALKDQVPGSYCVQMIIPDHYKQVAQSEDSPFDSDVKYCFDLVDTSITNANLGLIPLYPIGDSVWLDPFNTGKRTDDSPGVEGIELNLVDKDDKVIQSTTSGPDGKYQFEDVPPGDYCIEAEFPSDTYQAVNTSSDSPFSPTSNESIVKSCFKVSGPLDNQNLGLSPFYEIGTIVWIDSNNNDKFEQPSDIGKSDVSITLTNSGNGETSTIQTDVDGNYNFNHLLAGDYCIKVTQPDQYQFVVTSDDSVVDSTGEYCFKLTQSNPNINIGLVPLNSIGSVSWLDKNNNGKKEDNEFLPGVELSLQDPSGKVLDTTTTDESGNYKFDNLLPGDYCIVATTPIGSIPVTSSPDNLFVNNKYCLTFTGPQPIDRTDVNPGFVSTLDIGQYVWIDKNNNGKEEPDEPLLPGVQVIITSPNGTKIADLVTDENGKYALKDQVPGPYCVQMVIPDHYKQVAQSEDSPFDSDVKYCFDLVDKSIANANLGLIPLYPIGDTVWLDSFNTGIQLENSPGIPNIVLTLTDKNGNTIIKSIPTDDIGKYQFDDVEPGDYCIKVSVPSDYSPVNKSSDSPFSLSSQSDVESCFTVSGPTDNQDLGLIPLLKIGTIVWIDSNNNNVYDKPVDVGKSEFQIKLTNTGSGQSSTTQTDSNGNYHFDHLLPGNYCIETTTPIKYHFVQPSKDSVVDQTTGKYCFLLTQSNPNINIGISPLNSIGSVSWLDKNNNGNKEDNEFLPGVELSLQDSNGKVLQTTTTNESGNYKFDNLPQGDYCIIATTPIGSIPVTGSSDNLFVNNKYCLTFTGPQPIDRTDVNPGFVPTLDIGQYVWIDKNNNGKEESDEPLLPGIQIHIFSPNGTSIANLVTDENGKYALKDQVPGSYCVQMVIPPHYEQVAQSKDSPFDSDVKYCFDLLDKSITNANLGLIPLYNIGSDAWLDNLNNGVRRNDSLLVPNVTMSLYDNNGNLIETTITNSSGKYQFNDIQPGSYCVRATVPSNYLADSYSEVSPFKNFTDTSPTNPLAELQYCFAVTDSNVLNANIGLIPYLVVDGTTWVDLDLSKFLSSSDLLLPNVTVQLYDKVSGNILAATRSDDKGGYVVPNLLPSADYCVQFEVPPGYIVVVDSDDSVTNSTGGFCFPLFGDMSDVNLGLDTIFGVGYIAWLDINNDGKRQDNEFLSDVELSLIDPLGNVIETTKTDINGNYMFYPLLMGKYCLNATTPLGTIPVTGSKDSPFINGQYCVRLNGHIPYNNTNVNPGFVSTLDIGQYVWIEKNNNGIKELDEPLLPGVSVSLFSPNGTSIANTITDENGKYAFKDQVPGSYCIKMIIPPHYQQVIQSQDSPFNKSTIYCFDLTTSSITNANLGLTPLLTVGDTAWLDPLNTGKRLPTSAGVPNITMTLLDSQGKQINSTITNANGFYQFVDVAPGNYCMSAGPINSALYKFVNTSLDSPFILSTSKNVTTYCFNVNATNLTNVNVGLTPFYTLGDNVWIDKLNNGIKDLDDPLQANVSLSLVNTGNSEIKTTTTNSQGKYSFGQLLAGNYCLTASVPQNFKAVTKSNDSPFSPIGGDSNTQQYCFTLSGNKNDANLGLVPLYCVGKYVWIDINGNGHPEPTEEPYRNLTITLTPNNTALPTQTTTTDVNGNYRFDNLVVGNYCVSLSIIDNYIMTKITNDSVFNPQGLSCFTINYGDPICRNDINGGLIPPIFSIGDFVFRDVNGNGLFDSAQDTPLVNITVRLLNLFNTTLMTTTTDSQGIYHFVNVEQGDYVVQFGYPKQLKPSPITDQSKVNSRGRVSVSLRINSPDVTASIASDKVPTYYINRNIDAGFTTEYLSIGFIVFNDDNKDGQMQPSEMGMANITVFLRSGSNLSQTIATTTTDANGTYIFTHLAPGNYCVSLTVPKEFYPTLLTPTTFNRGDSNAIACTNVSVFSPTVQRFSIPSHTEDTYQDATVNFGLAPYKYAVGTYIWVDKNGNGGAESYEPAVEGITVRIYDSNFNFITSTVTNPSGIYIFDNLYPGVYNLAITPPVGFTISNNTLQDNKANATGYISIDLSQNDKALMLIDSTWNLKANYINIYQDFGIVPPKIAIGRFVFLDINNNGKKDVDEPGIANVTISIGSKTKQTDANGFYIFDNLETGNDCLTFIPPNPTYQLGISGPDNFLKGNNTLCLDIEIYNNTLRTVPSDNLKAFNKNYTFNVGYVPQSFIIGDTIWIDSNNNSLLDNGEVGADGIKVELLVSSDLSPALDILGKPISSQVTTANGKYLFQNVSSGPSYVVRLTIPANSTKYIAGTTYSPILTGGMSRATANGQVIVLNNFTLDTTYGSNTWKNLNNDAGIVIPCYSIGQQSWSDGNLNGIFDINEIGFPYVNLTLFNADGSTPNDIFGKPIQMAVTDVNGKYSIPNVPPGSYYMTVSIPPRYIISNFTTTGLVNNRFFPLNRTTPIFTMPGPDVVTVSSVSRCRQAYNKANVGINTPYVALGVRTFIDTNKNGIFDIDEKPLPNVTVLLLNNNGQPVMGSDGNPLKAVSNSQGYYYIDNVRLGYYIVQFVIPAGYSITPTKLVSTSNQVENNAFPNGRTDAFNLIITSSDIRSRFDNESNLYTAPYLDPTHDAGFVFTTMGVFGYVWNDVLQDGLFEMGSVPPGNFTVQLKSANQAVNGGLTTVPIGTVVATSPVAANGSFSIPNLQLGNYTLTLIPPSGSGWLTTKFNVTGSPTNSLLLGTFNSTMFTLDANDDDNIVCPFSQYKCKPVNLGVIRPSLKNVTGRVFKDYNCNGKYDISGQFGTAKDIPLSKIPVYIYYADSKTPFNSTLTDSTGSYSFFNLVQDGNYLITVGTPALPTGSGDKVETCRPTSVILPNTYTVPAGFADFSFITNEETCNDVPNLSVGCYVIGNSDENGPNTGEPVIVMFPYNSTQHNQITPLSFYYESGTTYGLAYDRSKKQLYASAFTKFGTDYGPGRLNAIYKIDTVTGRNSLYTRIDSFLEKDTEGTDDILGMDISLDTDFRISEIYRTAFGGIVINPYTRSLAVVGLQTRDIIIMPLDTQPNKTNTQRFTVPFGCTRTQDKYFWQPFAINFHQGKYYTGSVCGGPTIPDMNAIIHSFDPVTQVFTKVVTLPLNYSRGCKNFDSNTVCRNSTWQPWIDIDDNPQPVVASITFDGNDMVIGIRDREGDQGSFVSAPDILRICLVNGVYVPERDGKCGGAIGSHTGPSGYKGQIEGPGTGEFYNDNFRKGQIGHDDTGGLSVFQVPGFPEVASASFDATTVFEGVVKFYNNNNGTLRSSFQVYLTDNSDTVNPVTFGKASGLGQLVAHCSPKPITLGSIVFIDTNGNGIQEPWEQGKQGVAVSLLFANGTLIQKQSTDSLGLFKFINPPYQNQQYIITADSVTLSIIPSPLPTSSIPYNAATMVNGKATISNILILDPMIASSRYDLNFGVTN</sequence>
<reference key="1">
    <citation type="journal article" date="2005" name="Nature">
        <title>The genome of the social amoeba Dictyostelium discoideum.</title>
        <authorList>
            <person name="Eichinger L."/>
            <person name="Pachebat J.A."/>
            <person name="Gloeckner G."/>
            <person name="Rajandream M.A."/>
            <person name="Sucgang R."/>
            <person name="Berriman M."/>
            <person name="Song J."/>
            <person name="Olsen R."/>
            <person name="Szafranski K."/>
            <person name="Xu Q."/>
            <person name="Tunggal B."/>
            <person name="Kummerfeld S."/>
            <person name="Madera M."/>
            <person name="Konfortov B.A."/>
            <person name="Rivero F."/>
            <person name="Bankier A.T."/>
            <person name="Lehmann R."/>
            <person name="Hamlin N."/>
            <person name="Davies R."/>
            <person name="Gaudet P."/>
            <person name="Fey P."/>
            <person name="Pilcher K."/>
            <person name="Chen G."/>
            <person name="Saunders D."/>
            <person name="Sodergren E.J."/>
            <person name="Davis P."/>
            <person name="Kerhornou A."/>
            <person name="Nie X."/>
            <person name="Hall N."/>
            <person name="Anjard C."/>
            <person name="Hemphill L."/>
            <person name="Bason N."/>
            <person name="Farbrother P."/>
            <person name="Desany B."/>
            <person name="Just E."/>
            <person name="Morio T."/>
            <person name="Rost R."/>
            <person name="Churcher C.M."/>
            <person name="Cooper J."/>
            <person name="Haydock S."/>
            <person name="van Driessche N."/>
            <person name="Cronin A."/>
            <person name="Goodhead I."/>
            <person name="Muzny D.M."/>
            <person name="Mourier T."/>
            <person name="Pain A."/>
            <person name="Lu M."/>
            <person name="Harper D."/>
            <person name="Lindsay R."/>
            <person name="Hauser H."/>
            <person name="James K.D."/>
            <person name="Quiles M."/>
            <person name="Madan Babu M."/>
            <person name="Saito T."/>
            <person name="Buchrieser C."/>
            <person name="Wardroper A."/>
            <person name="Felder M."/>
            <person name="Thangavelu M."/>
            <person name="Johnson D."/>
            <person name="Knights A."/>
            <person name="Loulseged H."/>
            <person name="Mungall K.L."/>
            <person name="Oliver K."/>
            <person name="Price C."/>
            <person name="Quail M.A."/>
            <person name="Urushihara H."/>
            <person name="Hernandez J."/>
            <person name="Rabbinowitsch E."/>
            <person name="Steffen D."/>
            <person name="Sanders M."/>
            <person name="Ma J."/>
            <person name="Kohara Y."/>
            <person name="Sharp S."/>
            <person name="Simmonds M.N."/>
            <person name="Spiegler S."/>
            <person name="Tivey A."/>
            <person name="Sugano S."/>
            <person name="White B."/>
            <person name="Walker D."/>
            <person name="Woodward J.R."/>
            <person name="Winckler T."/>
            <person name="Tanaka Y."/>
            <person name="Shaulsky G."/>
            <person name="Schleicher M."/>
            <person name="Weinstock G.M."/>
            <person name="Rosenthal A."/>
            <person name="Cox E.C."/>
            <person name="Chisholm R.L."/>
            <person name="Gibbs R.A."/>
            <person name="Loomis W.F."/>
            <person name="Platzer M."/>
            <person name="Kay R.R."/>
            <person name="Williams J.G."/>
            <person name="Dear P.H."/>
            <person name="Noegel A.A."/>
            <person name="Barrell B.G."/>
            <person name="Kuspa A."/>
        </authorList>
    </citation>
    <scope>NUCLEOTIDE SEQUENCE [LARGE SCALE GENOMIC DNA]</scope>
    <source>
        <strain>AX4</strain>
    </source>
</reference>
<feature type="signal peptide" evidence="1">
    <location>
        <begin position="1"/>
        <end position="35"/>
    </location>
</feature>
<feature type="chain" id="PRO_0000363152" description="Colossin-A">
    <location>
        <begin position="36"/>
        <end position="11103"/>
    </location>
</feature>
<feature type="repeat" description="Kelch 1">
    <location>
        <begin position="273"/>
        <end position="324"/>
    </location>
</feature>
<feature type="domain" description="CNA-B 1">
    <location>
        <begin position="298"/>
        <end position="359"/>
    </location>
</feature>
<feature type="domain" description="CNA-B 2">
    <location>
        <begin position="423"/>
        <end position="469"/>
    </location>
</feature>
<feature type="domain" description="CNA-B 3">
    <location>
        <begin position="551"/>
        <end position="599"/>
    </location>
</feature>
<feature type="domain" description="CNA-B 4">
    <location>
        <begin position="676"/>
        <end position="745"/>
    </location>
</feature>
<feature type="domain" description="CNA-B 5">
    <location>
        <begin position="803"/>
        <end position="871"/>
    </location>
</feature>
<feature type="domain" description="CNA-B 6">
    <location>
        <begin position="931"/>
        <end position="999"/>
    </location>
</feature>
<feature type="domain" description="CNA-B 7">
    <location>
        <begin position="1057"/>
        <end position="1095"/>
    </location>
</feature>
<feature type="domain" description="CNA-B 8">
    <location>
        <begin position="1170"/>
        <end position="1231"/>
    </location>
</feature>
<feature type="domain" description="CNA-B 9">
    <location>
        <begin position="1277"/>
        <end position="1314"/>
    </location>
</feature>
<feature type="domain" description="CNA-B 10">
    <location>
        <begin position="1391"/>
        <end position="1458"/>
    </location>
</feature>
<feature type="domain" description="CNA-B 11">
    <location>
        <begin position="1494"/>
        <end position="1530"/>
    </location>
</feature>
<feature type="domain" description="CNA-B 12">
    <location>
        <begin position="1602"/>
        <end position="1651"/>
    </location>
</feature>
<feature type="domain" description="CNA-B 13">
    <location>
        <begin position="1708"/>
        <end position="1779"/>
    </location>
</feature>
<feature type="domain" description="CNA-B 14">
    <location>
        <begin position="1824"/>
        <end position="1891"/>
    </location>
</feature>
<feature type="domain" description="CNA-B 15">
    <location>
        <begin position="1927"/>
        <end position="1963"/>
    </location>
</feature>
<feature type="domain" description="CNA-B 16">
    <location>
        <begin position="2035"/>
        <end position="2086"/>
    </location>
</feature>
<feature type="domain" description="CNA-B 17">
    <location>
        <begin position="2141"/>
        <end position="2177"/>
    </location>
</feature>
<feature type="domain" description="CNA-B 18">
    <location>
        <begin position="2254"/>
        <end position="2321"/>
    </location>
</feature>
<feature type="domain" description="CNA-B 19">
    <location>
        <begin position="2357"/>
        <end position="2402"/>
    </location>
</feature>
<feature type="domain" description="CNA-B 20">
    <location>
        <begin position="2465"/>
        <end position="2514"/>
    </location>
</feature>
<feature type="domain" description="CNA-B 21">
    <location>
        <begin position="2571"/>
        <end position="2640"/>
    </location>
</feature>
<feature type="domain" description="CNA-B 22">
    <location>
        <begin position="2687"/>
        <end position="2754"/>
    </location>
</feature>
<feature type="domain" description="CNA-B 23">
    <location>
        <begin position="2790"/>
        <end position="2835"/>
    </location>
</feature>
<feature type="domain" description="CNA-B 24">
    <location>
        <begin position="2898"/>
        <end position="2947"/>
    </location>
</feature>
<feature type="domain" description="CNA-B 25">
    <location>
        <begin position="3004"/>
        <end position="3040"/>
    </location>
</feature>
<feature type="domain" description="CNA-B 26">
    <location>
        <begin position="3117"/>
        <end position="3184"/>
    </location>
</feature>
<feature type="domain" description="CNA-B 27">
    <location>
        <begin position="3220"/>
        <end position="3256"/>
    </location>
</feature>
<feature type="domain" description="CNA-B 28">
    <location>
        <begin position="3328"/>
        <end position="3364"/>
    </location>
</feature>
<feature type="domain" description="CNA-B 29">
    <location>
        <begin position="3434"/>
        <end position="3470"/>
    </location>
</feature>
<feature type="repeat" description="Kelch 2">
    <location>
        <begin position="3503"/>
        <end position="3549"/>
    </location>
</feature>
<feature type="domain" description="CNA-B 30">
    <location>
        <begin position="3547"/>
        <end position="3614"/>
    </location>
</feature>
<feature type="domain" description="CNA-B 31">
    <location>
        <begin position="3650"/>
        <end position="3686"/>
    </location>
</feature>
<feature type="domain" description="CNA-B 32">
    <location>
        <begin position="3758"/>
        <end position="3809"/>
    </location>
</feature>
<feature type="domain" description="CNA-B 33">
    <location>
        <begin position="3864"/>
        <end position="3900"/>
    </location>
</feature>
<feature type="domain" description="CNA-B 34">
    <location>
        <begin position="3980"/>
        <end position="4047"/>
    </location>
</feature>
<feature type="domain" description="CNA-B 35">
    <location>
        <begin position="4083"/>
        <end position="4128"/>
    </location>
</feature>
<feature type="domain" description="CNA-B 36">
    <location>
        <begin position="4191"/>
        <end position="4240"/>
    </location>
</feature>
<feature type="domain" description="CNA-B 37">
    <location>
        <begin position="4297"/>
        <end position="4378"/>
    </location>
</feature>
<feature type="domain" description="CNA-B 38">
    <location>
        <begin position="4425"/>
        <end position="4492"/>
    </location>
</feature>
<feature type="domain" description="CNA-B 39">
    <location>
        <begin position="4528"/>
        <end position="4573"/>
    </location>
</feature>
<feature type="domain" description="CNA-B 40">
    <location>
        <begin position="4636"/>
        <end position="4685"/>
    </location>
</feature>
<feature type="domain" description="CNA-B 41">
    <location>
        <begin position="4742"/>
        <end position="4778"/>
    </location>
</feature>
<feature type="domain" description="CNA-B 42">
    <location>
        <begin position="4865"/>
        <end position="4928"/>
    </location>
</feature>
<feature type="domain" description="CNA-B 43">
    <location>
        <begin position="4964"/>
        <end position="5009"/>
    </location>
</feature>
<feature type="domain" description="CNA-B 44">
    <location>
        <begin position="5072"/>
        <end position="5123"/>
    </location>
</feature>
<feature type="domain" description="CNA-B 45">
    <location>
        <begin position="5178"/>
        <end position="5214"/>
    </location>
</feature>
<feature type="repeat" description="Kelch 3">
    <location>
        <begin position="5247"/>
        <end position="5293"/>
    </location>
</feature>
<feature type="domain" description="CNA-B 46">
    <location>
        <begin position="5291"/>
        <end position="5358"/>
    </location>
</feature>
<feature type="domain" description="CNA-B 47">
    <location>
        <begin position="5394"/>
        <end position="5430"/>
    </location>
</feature>
<feature type="domain" description="CNA-B 48">
    <location>
        <begin position="5502"/>
        <end position="5553"/>
    </location>
</feature>
<feature type="domain" description="CNA-B 49">
    <location>
        <begin position="5608"/>
        <end position="5644"/>
    </location>
</feature>
<feature type="domain" description="CNA-B 50">
    <location>
        <begin position="5724"/>
        <end position="5791"/>
    </location>
</feature>
<feature type="domain" description="CNA-B 51">
    <location>
        <begin position="5827"/>
        <end position="5872"/>
    </location>
</feature>
<feature type="domain" description="CNA-B 52">
    <location>
        <begin position="5935"/>
        <end position="5984"/>
    </location>
</feature>
<feature type="domain" description="CNA-B 53">
    <location>
        <begin position="6041"/>
        <end position="6077"/>
    </location>
</feature>
<feature type="domain" description="CNA-B 54">
    <location>
        <begin position="6154"/>
        <end position="6221"/>
    </location>
</feature>
<feature type="domain" description="CNA-B 55">
    <location>
        <begin position="6257"/>
        <end position="6302"/>
    </location>
</feature>
<feature type="domain" description="CNA-B 56">
    <location>
        <begin position="6365"/>
        <end position="6416"/>
    </location>
</feature>
<feature type="domain" description="CNA-B 57">
    <location>
        <begin position="6471"/>
        <end position="6507"/>
    </location>
</feature>
<feature type="domain" description="CNA-B 58">
    <location>
        <begin position="6587"/>
        <end position="6654"/>
    </location>
</feature>
<feature type="domain" description="CNA-B 59">
    <location>
        <begin position="6690"/>
        <end position="6726"/>
    </location>
</feature>
<feature type="domain" description="CNA-B 60">
    <location>
        <begin position="6798"/>
        <end position="6849"/>
    </location>
</feature>
<feature type="domain" description="CNA-B 61">
    <location>
        <begin position="6904"/>
        <end position="6940"/>
    </location>
</feature>
<feature type="domain" description="CNA-B 62">
    <location>
        <begin position="7023"/>
        <end position="7090"/>
    </location>
</feature>
<feature type="domain" description="CNA-B 63">
    <location>
        <begin position="7126"/>
        <end position="7171"/>
    </location>
</feature>
<feature type="domain" description="CNA-B 64">
    <location>
        <begin position="7234"/>
        <end position="7285"/>
    </location>
</feature>
<feature type="domain" description="CNA-B 65">
    <location>
        <begin position="7340"/>
        <end position="7411"/>
    </location>
</feature>
<feature type="domain" description="CNA-B 66">
    <location>
        <begin position="7456"/>
        <end position="7523"/>
    </location>
</feature>
<feature type="domain" description="CNA-B 67">
    <location>
        <begin position="7559"/>
        <end position="7596"/>
    </location>
</feature>
<feature type="domain" description="CNA-B 68">
    <location>
        <begin position="7668"/>
        <end position="7719"/>
    </location>
</feature>
<feature type="domain" description="CNA-B 69">
    <location>
        <begin position="7774"/>
        <end position="7810"/>
    </location>
</feature>
<feature type="domain" description="CNA-B 70">
    <location>
        <begin position="7887"/>
        <end position="7954"/>
    </location>
</feature>
<feature type="domain" description="CNA-B 71">
    <location>
        <begin position="7990"/>
        <end position="8035"/>
    </location>
</feature>
<feature type="domain" description="CNA-B 72">
    <location>
        <begin position="8098"/>
        <end position="8149"/>
    </location>
</feature>
<feature type="domain" description="CNA-B 73">
    <location>
        <begin position="8204"/>
        <end position="8265"/>
    </location>
</feature>
<feature type="domain" description="CNA-B 74">
    <location>
        <begin position="8313"/>
        <end position="8374"/>
    </location>
</feature>
<feature type="domain" description="CNA-B 75">
    <location>
        <begin position="8420"/>
        <end position="8456"/>
    </location>
</feature>
<feature type="domain" description="CNA-B 76">
    <location>
        <begin position="8528"/>
        <end position="8587"/>
    </location>
</feature>
<feature type="repeat" description="Kelch 4">
    <location>
        <begin position="8592"/>
        <end position="8638"/>
    </location>
</feature>
<feature type="domain" description="CNA-B 77">
    <location>
        <begin position="8634"/>
        <end position="8680"/>
    </location>
</feature>
<feature type="domain" description="CNA-B 78">
    <location>
        <begin position="8751"/>
        <end position="8810"/>
    </location>
</feature>
<feature type="domain" description="CNA-B 79">
    <location>
        <begin position="8965"/>
        <end position="9014"/>
    </location>
</feature>
<feature type="domain" description="CNA-B 80">
    <location>
        <begin position="9071"/>
        <end position="9107"/>
    </location>
</feature>
<feature type="domain" description="CNA-B 81">
    <location>
        <begin position="9185"/>
        <end position="9220"/>
    </location>
</feature>
<feature type="domain" description="CNA-B 82">
    <location>
        <begin position="9299"/>
        <end position="9332"/>
    </location>
</feature>
<feature type="domain" description="CNA-B 83">
    <location>
        <begin position="9407"/>
        <end position="9447"/>
    </location>
</feature>
<feature type="domain" description="CNA-B 84">
    <location>
        <begin position="9531"/>
        <end position="9569"/>
    </location>
</feature>
<feature type="domain" description="CNA-B 85">
    <location>
        <begin position="9659"/>
        <end position="9728"/>
    </location>
</feature>
<feature type="domain" description="CNA-B 86">
    <location>
        <begin position="10044"/>
        <end position="10103"/>
    </location>
</feature>
<feature type="domain" description="CNA-B 87">
    <location>
        <begin position="10172"/>
        <end position="10236"/>
    </location>
</feature>
<feature type="domain" description="CNA-B 88">
    <location>
        <begin position="10313"/>
        <end position="10370"/>
    </location>
</feature>
<feature type="region of interest" description="Disordered" evidence="2">
    <location>
        <begin position="1716"/>
        <end position="1740"/>
    </location>
</feature>
<feature type="region of interest" description="Disordered" evidence="2">
    <location>
        <begin position="2580"/>
        <end position="2603"/>
    </location>
</feature>
<feature type="region of interest" description="Disordered" evidence="2">
    <location>
        <begin position="4286"/>
        <end position="4341"/>
    </location>
</feature>
<feature type="region of interest" description="Disordered" evidence="2">
    <location>
        <begin position="7351"/>
        <end position="7372"/>
    </location>
</feature>
<feature type="compositionally biased region" description="Basic and acidic residues" evidence="2">
    <location>
        <begin position="4304"/>
        <end position="4321"/>
    </location>
</feature>
<feature type="glycosylation site" description="N-linked (GlcNAc...) asparagine" evidence="1">
    <location>
        <position position="95"/>
    </location>
</feature>
<feature type="glycosylation site" description="N-linked (GlcNAc...) asparagine" evidence="1">
    <location>
        <position position="120"/>
    </location>
</feature>
<feature type="glycosylation site" description="N-linked (GlcNAc...) asparagine" evidence="1">
    <location>
        <position position="137"/>
    </location>
</feature>
<feature type="glycosylation site" description="N-linked (GlcNAc...) asparagine" evidence="1">
    <location>
        <position position="198"/>
    </location>
</feature>
<feature type="glycosylation site" description="N-linked (GlcNAc...) asparagine" evidence="1">
    <location>
        <position position="372"/>
    </location>
</feature>
<feature type="glycosylation site" description="N-linked (GlcNAc...) asparagine" evidence="1">
    <location>
        <position position="386"/>
    </location>
</feature>
<feature type="glycosylation site" description="N-linked (GlcNAc...) asparagine" evidence="1">
    <location>
        <position position="422"/>
    </location>
</feature>
<feature type="glycosylation site" description="N-linked (GlcNAc...) asparagine" evidence="1">
    <location>
        <position position="493"/>
    </location>
</feature>
<feature type="glycosylation site" description="N-linked (GlcNAc...) asparagine" evidence="1">
    <location>
        <position position="678"/>
    </location>
</feature>
<feature type="glycosylation site" description="N-linked (GlcNAc...) asparagine" evidence="1">
    <location>
        <position position="1059"/>
    </location>
</feature>
<feature type="glycosylation site" description="N-linked (GlcNAc...) asparagine" evidence="1">
    <location>
        <position position="1229"/>
    </location>
</feature>
<feature type="glycosylation site" description="N-linked (GlcNAc...) asparagine" evidence="1">
    <location>
        <position position="1239"/>
    </location>
</feature>
<feature type="glycosylation site" description="N-linked (GlcNAc...) asparagine" evidence="1">
    <location>
        <position position="1329"/>
    </location>
</feature>
<feature type="glycosylation site" description="N-linked (GlcNAc...) asparagine" evidence="1">
    <location>
        <position position="1613"/>
    </location>
</feature>
<feature type="glycosylation site" description="N-linked (GlcNAc...) asparagine" evidence="1">
    <location>
        <position position="1759"/>
    </location>
</feature>
<feature type="glycosylation site" description="N-linked (GlcNAc...) asparagine" evidence="1">
    <location>
        <position position="1772"/>
    </location>
</feature>
<feature type="glycosylation site" description="N-linked (GlcNAc...) asparagine" evidence="1">
    <location>
        <position position="2046"/>
    </location>
</feature>
<feature type="glycosylation site" description="N-linked (GlcNAc...) asparagine" evidence="1">
    <location>
        <position position="2192"/>
    </location>
</feature>
<feature type="glycosylation site" description="N-linked (GlcNAc...) asparagine" evidence="1">
    <location>
        <position position="2311"/>
    </location>
</feature>
<feature type="glycosylation site" description="N-linked (GlcNAc...) asparagine" evidence="1">
    <location>
        <position position="2476"/>
    </location>
</feature>
<feature type="glycosylation site" description="N-linked (GlcNAc...) asparagine" evidence="1">
    <location>
        <position position="2622"/>
    </location>
</feature>
<feature type="glycosylation site" description="N-linked (GlcNAc...) asparagine" evidence="1">
    <location>
        <position position="2801"/>
    </location>
</feature>
<feature type="glycosylation site" description="N-linked (GlcNAc...) asparagine" evidence="1">
    <location>
        <position position="2909"/>
    </location>
</feature>
<feature type="glycosylation site" description="N-linked (GlcNAc...) asparagine" evidence="1">
    <location>
        <position position="3048"/>
    </location>
</feature>
<feature type="glycosylation site" description="N-linked (GlcNAc...) asparagine" evidence="1">
    <location>
        <position position="3055"/>
    </location>
</feature>
<feature type="glycosylation site" description="N-linked (GlcNAc...) asparagine" evidence="1">
    <location>
        <position position="3118"/>
    </location>
</feature>
<feature type="glycosylation site" description="N-linked (GlcNAc...) asparagine" evidence="1">
    <location>
        <position position="3339"/>
    </location>
</feature>
<feature type="glycosylation site" description="N-linked (GlcNAc...) asparagine" evidence="1">
    <location>
        <position position="3485"/>
    </location>
</feature>
<feature type="glycosylation site" description="N-linked (GlcNAc...) asparagine" evidence="1">
    <location>
        <position position="3769"/>
    </location>
</feature>
<feature type="glycosylation site" description="N-linked (GlcNAc...) asparagine" evidence="1">
    <location>
        <position position="3827"/>
    </location>
</feature>
<feature type="glycosylation site" description="N-linked (GlcNAc...) asparagine" evidence="1">
    <location>
        <position position="3915"/>
    </location>
</feature>
<feature type="glycosylation site" description="N-linked (GlcNAc...) asparagine" evidence="1">
    <location>
        <position position="4202"/>
    </location>
</feature>
<feature type="glycosylation site" description="N-linked (GlcNAc...) asparagine" evidence="1">
    <location>
        <position position="4360"/>
    </location>
</feature>
<feature type="glycosylation site" description="N-linked (GlcNAc...) asparagine" evidence="1">
    <location>
        <position position="4647"/>
    </location>
</feature>
<feature type="glycosylation site" description="N-linked (GlcNAc...) asparagine" evidence="1">
    <location>
        <position position="4792"/>
    </location>
</feature>
<feature type="glycosylation site" description="N-linked (GlcNAc...) asparagine" evidence="1">
    <location>
        <position position="4918"/>
    </location>
</feature>
<feature type="glycosylation site" description="N-linked (GlcNAc...) asparagine" evidence="1">
    <location>
        <position position="5083"/>
    </location>
</feature>
<feature type="glycosylation site" description="N-linked (GlcNAc...) asparagine" evidence="1">
    <location>
        <position position="5229"/>
    </location>
</feature>
<feature type="glycosylation site" description="N-linked (GlcNAc...) asparagine" evidence="1">
    <location>
        <position position="5292"/>
    </location>
</feature>
<feature type="glycosylation site" description="N-linked (GlcNAc...) asparagine" evidence="1">
    <location>
        <position position="5348"/>
    </location>
</feature>
<feature type="glycosylation site" description="N-linked (GlcNAc...) asparagine" evidence="1">
    <location>
        <position position="5513"/>
    </location>
</feature>
<feature type="glycosylation site" description="N-linked (GlcNAc...) asparagine" evidence="1">
    <location>
        <position position="5659"/>
    </location>
</feature>
<feature type="glycosylation site" description="N-linked (GlcNAc...) asparagine" evidence="1">
    <location>
        <position position="5946"/>
    </location>
</feature>
<feature type="glycosylation site" description="N-linked (GlcNAc...) asparagine" evidence="1">
    <location>
        <position position="6092"/>
    </location>
</feature>
<feature type="glycosylation site" description="N-linked (GlcNAc...) asparagine" evidence="1">
    <location>
        <position position="6155"/>
    </location>
</feature>
<feature type="glycosylation site" description="N-linked (GlcNAc...) asparagine" evidence="1">
    <location>
        <position position="6376"/>
    </location>
</feature>
<feature type="glycosylation site" description="N-linked (GlcNAc...) asparagine" evidence="1">
    <location>
        <position position="6522"/>
    </location>
</feature>
<feature type="glycosylation site" description="N-linked (GlcNAc...) asparagine" evidence="1">
    <location>
        <position position="6535"/>
    </location>
</feature>
<feature type="glycosylation site" description="N-linked (GlcNAc...) asparagine" evidence="1">
    <location>
        <position position="6701"/>
    </location>
</feature>
<feature type="glycosylation site" description="N-linked (GlcNAc...) asparagine" evidence="1">
    <location>
        <position position="6809"/>
    </location>
</feature>
<feature type="glycosylation site" description="N-linked (GlcNAc...) asparagine" evidence="1">
    <location>
        <position position="6848"/>
    </location>
</feature>
<feature type="glycosylation site" description="N-linked (GlcNAc...) asparagine" evidence="1">
    <location>
        <position position="6954"/>
    </location>
</feature>
<feature type="glycosylation site" description="N-linked (GlcNAc...) asparagine" evidence="1">
    <location>
        <position position="7080"/>
    </location>
</feature>
<feature type="glycosylation site" description="N-linked (GlcNAc...) asparagine" evidence="1">
    <location>
        <position position="7137"/>
    </location>
</feature>
<feature type="glycosylation site" description="N-linked (GlcNAc...) asparagine" evidence="1">
    <location>
        <position position="7245"/>
    </location>
</feature>
<feature type="glycosylation site" description="N-linked (GlcNAc...) asparagine" evidence="1">
    <location>
        <position position="7391"/>
    </location>
</feature>
<feature type="glycosylation site" description="N-linked (GlcNAc...) asparagine" evidence="1">
    <location>
        <position position="7404"/>
    </location>
</feature>
<feature type="glycosylation site" description="N-linked (GlcNAc...) asparagine" evidence="1">
    <location>
        <position position="7679"/>
    </location>
</feature>
<feature type="glycosylation site" description="N-linked (GlcNAc...) asparagine" evidence="1">
    <location>
        <position position="7825"/>
    </location>
</feature>
<feature type="glycosylation site" description="N-linked (GlcNAc...) asparagine" evidence="1">
    <location>
        <position position="7837"/>
    </location>
</feature>
<feature type="glycosylation site" description="N-linked (GlcNAc...) asparagine" evidence="1">
    <location>
        <position position="8109"/>
    </location>
</feature>
<feature type="glycosylation site" description="N-linked (GlcNAc...) asparagine" evidence="1">
    <location>
        <position position="8255"/>
    </location>
</feature>
<feature type="glycosylation site" description="N-linked (GlcNAc...) asparagine" evidence="1">
    <location>
        <position position="8441"/>
    </location>
</feature>
<feature type="glycosylation site" description="N-linked (GlcNAc...) asparagine" evidence="1">
    <location>
        <position position="8539"/>
    </location>
</feature>
<feature type="glycosylation site" description="N-linked (GlcNAc...) asparagine" evidence="1">
    <location>
        <position position="8629"/>
    </location>
</feature>
<feature type="glycosylation site" description="N-linked (GlcNAc...) asparagine" evidence="1">
    <location>
        <position position="8636"/>
    </location>
</feature>
<feature type="glycosylation site" description="N-linked (GlcNAc...) asparagine" evidence="1">
    <location>
        <position position="8655"/>
    </location>
</feature>
<feature type="glycosylation site" description="N-linked (GlcNAc...) asparagine" evidence="1">
    <location>
        <position position="8693"/>
    </location>
</feature>
<feature type="glycosylation site" description="N-linked (GlcNAc...) asparagine" evidence="1">
    <location>
        <position position="8753"/>
    </location>
</feature>
<feature type="glycosylation site" description="N-linked (GlcNAc...) asparagine" evidence="1">
    <location>
        <position position="8811"/>
    </location>
</feature>
<feature type="glycosylation site" description="N-linked (GlcNAc...) asparagine" evidence="1">
    <location>
        <position position="8896"/>
    </location>
</feature>
<feature type="glycosylation site" description="N-linked (GlcNAc...) asparagine" evidence="1">
    <location>
        <position position="8930"/>
    </location>
</feature>
<feature type="glycosylation site" description="N-linked (GlcNAc...) asparagine" evidence="1">
    <location>
        <position position="8976"/>
    </location>
</feature>
<feature type="glycosylation site" description="N-linked (GlcNAc...) asparagine" evidence="1">
    <location>
        <position position="9023"/>
    </location>
</feature>
<feature type="glycosylation site" description="N-linked (GlcNAc...) asparagine" evidence="1">
    <location>
        <position position="9073"/>
    </location>
</feature>
<feature type="glycosylation site" description="N-linked (GlcNAc...) asparagine" evidence="1">
    <location>
        <position position="9087"/>
    </location>
</feature>
<feature type="glycosylation site" description="N-linked (GlcNAc...) asparagine" evidence="1">
    <location>
        <position position="9123"/>
    </location>
</feature>
<feature type="glycosylation site" description="N-linked (GlcNAc...) asparagine" evidence="1">
    <location>
        <position position="9137"/>
    </location>
</feature>
<feature type="glycosylation site" description="N-linked (GlcNAc...) asparagine" evidence="1">
    <location>
        <position position="9146"/>
    </location>
</feature>
<feature type="glycosylation site" description="N-linked (GlcNAc...) asparagine" evidence="1">
    <location>
        <position position="9149"/>
    </location>
</feature>
<feature type="glycosylation site" description="N-linked (GlcNAc...) asparagine" evidence="1">
    <location>
        <position position="9186"/>
    </location>
</feature>
<feature type="glycosylation site" description="N-linked (GlcNAc...) asparagine" evidence="1">
    <location>
        <position position="9297"/>
    </location>
</feature>
<feature type="glycosylation site" description="N-linked (GlcNAc...) asparagine" evidence="1">
    <location>
        <position position="9305"/>
    </location>
</feature>
<feature type="glycosylation site" description="N-linked (GlcNAc...) asparagine" evidence="1">
    <location>
        <position position="9349"/>
    </location>
</feature>
<feature type="glycosylation site" description="N-linked (GlcNAc...) asparagine" evidence="1">
    <location>
        <position position="9409"/>
    </location>
</feature>
<feature type="glycosylation site" description="N-linked (GlcNAc...) asparagine" evidence="1">
    <location>
        <position position="9419"/>
    </location>
</feature>
<feature type="glycosylation site" description="N-linked (GlcNAc...) asparagine" evidence="1">
    <location>
        <position position="9533"/>
    </location>
</feature>
<feature type="glycosylation site" description="N-linked (GlcNAc...) asparagine" evidence="1">
    <location>
        <position position="9543"/>
    </location>
</feature>
<feature type="glycosylation site" description="N-linked (GlcNAc...) asparagine" evidence="1">
    <location>
        <position position="9556"/>
    </location>
</feature>
<feature type="glycosylation site" description="N-linked (GlcNAc...) asparagine" evidence="1">
    <location>
        <position position="9601"/>
    </location>
</feature>
<feature type="glycosylation site" description="N-linked (GlcNAc...) asparagine" evidence="1">
    <location>
        <position position="9709"/>
    </location>
</feature>
<feature type="glycosylation site" description="N-linked (GlcNAc...) asparagine" evidence="1">
    <location>
        <position position="9718"/>
    </location>
</feature>
<feature type="glycosylation site" description="N-linked (GlcNAc...) asparagine" evidence="1">
    <location>
        <position position="9786"/>
    </location>
</feature>
<feature type="glycosylation site" description="N-linked (GlcNAc...) asparagine" evidence="1">
    <location>
        <position position="9839"/>
    </location>
</feature>
<feature type="glycosylation site" description="N-linked (GlcNAc...) asparagine" evidence="1">
    <location>
        <position position="9850"/>
    </location>
</feature>
<feature type="glycosylation site" description="N-linked (GlcNAc...) asparagine" evidence="1">
    <location>
        <position position="9867"/>
    </location>
</feature>
<feature type="glycosylation site" description="N-linked (GlcNAc...) asparagine" evidence="1">
    <location>
        <position position="9891"/>
    </location>
</feature>
<feature type="glycosylation site" description="N-linked (GlcNAc...) asparagine" evidence="1">
    <location>
        <position position="9941"/>
    </location>
</feature>
<feature type="glycosylation site" description="N-linked (GlcNAc...) asparagine" evidence="1">
    <location>
        <position position="9957"/>
    </location>
</feature>
<feature type="glycosylation site" description="N-linked (GlcNAc...) asparagine" evidence="1">
    <location>
        <position position="9989"/>
    </location>
</feature>
<feature type="glycosylation site" description="N-linked (GlcNAc...) asparagine" evidence="1">
    <location>
        <position position="10042"/>
    </location>
</feature>
<feature type="glycosylation site" description="N-linked (GlcNAc...) asparagine" evidence="1">
    <location>
        <position position="10096"/>
    </location>
</feature>
<feature type="glycosylation site" description="N-linked (GlcNAc...) asparagine" evidence="1">
    <location>
        <position position="10111"/>
    </location>
</feature>
<feature type="glycosylation site" description="N-linked (GlcNAc...) asparagine" evidence="1">
    <location>
        <position position="10174"/>
    </location>
</feature>
<feature type="glycosylation site" description="N-linked (GlcNAc...) asparagine" evidence="1">
    <location>
        <position position="10267"/>
    </location>
</feature>
<feature type="glycosylation site" description="N-linked (GlcNAc...) asparagine" evidence="1">
    <location>
        <position position="10315"/>
    </location>
</feature>
<feature type="glycosylation site" description="N-linked (GlcNAc...) asparagine" evidence="1">
    <location>
        <position position="10348"/>
    </location>
</feature>
<feature type="glycosylation site" description="N-linked (GlcNAc...) asparagine" evidence="1">
    <location>
        <position position="10360"/>
    </location>
</feature>
<feature type="glycosylation site" description="N-linked (GlcNAc...) asparagine" evidence="1">
    <location>
        <position position="10379"/>
    </location>
</feature>
<feature type="glycosylation site" description="N-linked (GlcNAc...) asparagine" evidence="1">
    <location>
        <position position="10394"/>
    </location>
</feature>
<feature type="glycosylation site" description="N-linked (GlcNAc...) asparagine" evidence="1">
    <location>
        <position position="10431"/>
    </location>
</feature>
<feature type="glycosylation site" description="N-linked (GlcNAc...) asparagine" evidence="1">
    <location>
        <position position="10477"/>
    </location>
</feature>
<feature type="glycosylation site" description="N-linked (GlcNAc...) asparagine" evidence="1">
    <location>
        <position position="10552"/>
    </location>
</feature>
<feature type="glycosylation site" description="N-linked (GlcNAc...) asparagine" evidence="1">
    <location>
        <position position="10581"/>
    </location>
</feature>
<feature type="glycosylation site" description="N-linked (GlcNAc...) asparagine" evidence="1">
    <location>
        <position position="10715"/>
    </location>
</feature>
<feature type="glycosylation site" description="N-linked (GlcNAc...) asparagine" evidence="1">
    <location>
        <position position="10786"/>
    </location>
</feature>
<feature type="glycosylation site" description="N-linked (GlcNAc...) asparagine" evidence="1">
    <location>
        <position position="10802"/>
    </location>
</feature>
<feature type="glycosylation site" description="N-linked (GlcNAc...) asparagine" evidence="1">
    <location>
        <position position="10943"/>
    </location>
</feature>
<feature type="glycosylation site" description="N-linked (GlcNAc...) asparagine" evidence="1">
    <location>
        <position position="11018"/>
    </location>
</feature>
<protein>
    <recommendedName>
        <fullName>Colossin-A</fullName>
    </recommendedName>
</protein>
<evidence type="ECO:0000255" key="1"/>
<evidence type="ECO:0000256" key="2">
    <source>
        <dbReference type="SAM" id="MobiDB-lite"/>
    </source>
</evidence>
<evidence type="ECO:0000305" key="3"/>
<name>COLA_DICDI</name>
<accession>Q54CU4</accession>
<proteinExistence type="inferred from homology"/>
<organism>
    <name type="scientific">Dictyostelium discoideum</name>
    <name type="common">Social amoeba</name>
    <dbReference type="NCBI Taxonomy" id="44689"/>
    <lineage>
        <taxon>Eukaryota</taxon>
        <taxon>Amoebozoa</taxon>
        <taxon>Evosea</taxon>
        <taxon>Eumycetozoa</taxon>
        <taxon>Dictyostelia</taxon>
        <taxon>Dictyosteliales</taxon>
        <taxon>Dictyosteliaceae</taxon>
        <taxon>Dictyostelium</taxon>
    </lineage>
</organism>
<dbReference type="EMBL" id="AAFI02000194">
    <property type="protein sequence ID" value="EAL61151.1"/>
    <property type="molecule type" value="Genomic_DNA"/>
</dbReference>
<dbReference type="RefSeq" id="XP_629576.1">
    <property type="nucleotide sequence ID" value="XM_629574.1"/>
</dbReference>
<dbReference type="SMR" id="Q54CU4"/>
<dbReference type="FunCoup" id="Q54CU4">
    <property type="interactions" value="243"/>
</dbReference>
<dbReference type="STRING" id="44689.Q54CU4"/>
<dbReference type="GlyCosmos" id="Q54CU4">
    <property type="glycosylation" value="119 sites, No reported glycans"/>
</dbReference>
<dbReference type="GlyGen" id="Q54CU4">
    <property type="glycosylation" value="121 sites"/>
</dbReference>
<dbReference type="PaxDb" id="44689-DDB0235178"/>
<dbReference type="EnsemblProtists" id="EAL61151">
    <property type="protein sequence ID" value="EAL61151"/>
    <property type="gene ID" value="DDB_G0292696"/>
</dbReference>
<dbReference type="GeneID" id="8628837"/>
<dbReference type="KEGG" id="ddi:DDB_G0292696"/>
<dbReference type="dictyBase" id="DDB_G0292696">
    <property type="gene designation" value="colA"/>
</dbReference>
<dbReference type="VEuPathDB" id="AmoebaDB:DDB_G0292696"/>
<dbReference type="eggNOG" id="ENOG502SAVK">
    <property type="taxonomic scope" value="Eukaryota"/>
</dbReference>
<dbReference type="HOGENOM" id="CLU_222645_0_0_1"/>
<dbReference type="InParanoid" id="Q54CU4"/>
<dbReference type="OMA" id="DIGQYVW"/>
<dbReference type="PRO" id="PR:Q54CU4"/>
<dbReference type="Proteomes" id="UP000002195">
    <property type="component" value="Chromosome 6"/>
</dbReference>
<dbReference type="GO" id="GO:0005576">
    <property type="term" value="C:extracellular region"/>
    <property type="evidence" value="ECO:0007669"/>
    <property type="project" value="UniProtKB-SubCell"/>
</dbReference>
<dbReference type="Gene3D" id="2.60.40.10">
    <property type="entry name" value="Immunoglobulins"/>
    <property type="match status" value="93"/>
</dbReference>
<dbReference type="InterPro" id="IPR013783">
    <property type="entry name" value="Ig-like_fold"/>
</dbReference>
<dbReference type="InterPro" id="IPR051417">
    <property type="entry name" value="SDr/BOS_complex"/>
</dbReference>
<dbReference type="InterPro" id="IPR033764">
    <property type="entry name" value="Sdr_B"/>
</dbReference>
<dbReference type="InterPro" id="IPR003903">
    <property type="entry name" value="UIM_dom"/>
</dbReference>
<dbReference type="PANTHER" id="PTHR23303">
    <property type="entry name" value="CARBOXYPEPTIDASE REGULATORY REGION-CONTAINING"/>
    <property type="match status" value="1"/>
</dbReference>
<dbReference type="PANTHER" id="PTHR23303:SF15">
    <property type="entry name" value="COLOSSIN-A"/>
    <property type="match status" value="1"/>
</dbReference>
<dbReference type="Pfam" id="PF17210">
    <property type="entry name" value="SdrD_B"/>
    <property type="match status" value="90"/>
</dbReference>
<dbReference type="SMART" id="SM00726">
    <property type="entry name" value="UIM"/>
    <property type="match status" value="11"/>
</dbReference>
<dbReference type="SUPFAM" id="SSF49478">
    <property type="entry name" value="Cna protein B-type domain"/>
    <property type="match status" value="2"/>
</dbReference>
<dbReference type="SUPFAM" id="SSF117074">
    <property type="entry name" value="Hypothetical protein PA1324"/>
    <property type="match status" value="91"/>
</dbReference>
<comment type="subcellular location">
    <subcellularLocation>
        <location evidence="3">Secreted</location>
    </subcellularLocation>
</comment>
<comment type="similarity">
    <text evidence="3">Belongs to the serine-aspartate repeat-containing protein (SDr) family.</text>
</comment>
<keyword id="KW-0325">Glycoprotein</keyword>
<keyword id="KW-0880">Kelch repeat</keyword>
<keyword id="KW-1185">Reference proteome</keyword>
<keyword id="KW-0677">Repeat</keyword>
<keyword id="KW-0964">Secreted</keyword>
<keyword id="KW-0732">Signal</keyword>
<gene>
    <name type="primary">colA</name>
    <name type="ORF">DDB_G0292696</name>
</gene>